<evidence type="ECO:0000255" key="1">
    <source>
        <dbReference type="HAMAP-Rule" id="MF_00255"/>
    </source>
</evidence>
<protein>
    <recommendedName>
        <fullName evidence="1">Glycine--tRNA ligase beta subunit</fullName>
        <ecNumber evidence="1">6.1.1.14</ecNumber>
    </recommendedName>
    <alternativeName>
        <fullName evidence="1">Glycyl-tRNA synthetase beta subunit</fullName>
        <shortName evidence="1">GlyRS</shortName>
    </alternativeName>
</protein>
<proteinExistence type="inferred from homology"/>
<keyword id="KW-0030">Aminoacyl-tRNA synthetase</keyword>
<keyword id="KW-0067">ATP-binding</keyword>
<keyword id="KW-0963">Cytoplasm</keyword>
<keyword id="KW-0436">Ligase</keyword>
<keyword id="KW-0547">Nucleotide-binding</keyword>
<keyword id="KW-0648">Protein biosynthesis</keyword>
<keyword id="KW-1185">Reference proteome</keyword>
<reference key="1">
    <citation type="submission" date="2005-10" db="EMBL/GenBank/DDBJ databases">
        <title>Complete sequence of Pelobacter carbinolicus DSM 2380.</title>
        <authorList>
            <person name="Copeland A."/>
            <person name="Lucas S."/>
            <person name="Lapidus A."/>
            <person name="Barry K."/>
            <person name="Detter J.C."/>
            <person name="Glavina T."/>
            <person name="Hammon N."/>
            <person name="Israni S."/>
            <person name="Pitluck S."/>
            <person name="Chertkov O."/>
            <person name="Schmutz J."/>
            <person name="Larimer F."/>
            <person name="Land M."/>
            <person name="Kyrpides N."/>
            <person name="Ivanova N."/>
            <person name="Richardson P."/>
        </authorList>
    </citation>
    <scope>NUCLEOTIDE SEQUENCE [LARGE SCALE GENOMIC DNA]</scope>
    <source>
        <strain>DSM 2380 / NBRC 103641 / GraBd1</strain>
    </source>
</reference>
<name>SYGB_SYNC1</name>
<comment type="catalytic activity">
    <reaction evidence="1">
        <text>tRNA(Gly) + glycine + ATP = glycyl-tRNA(Gly) + AMP + diphosphate</text>
        <dbReference type="Rhea" id="RHEA:16013"/>
        <dbReference type="Rhea" id="RHEA-COMP:9664"/>
        <dbReference type="Rhea" id="RHEA-COMP:9683"/>
        <dbReference type="ChEBI" id="CHEBI:30616"/>
        <dbReference type="ChEBI" id="CHEBI:33019"/>
        <dbReference type="ChEBI" id="CHEBI:57305"/>
        <dbReference type="ChEBI" id="CHEBI:78442"/>
        <dbReference type="ChEBI" id="CHEBI:78522"/>
        <dbReference type="ChEBI" id="CHEBI:456215"/>
        <dbReference type="EC" id="6.1.1.14"/>
    </reaction>
</comment>
<comment type="subunit">
    <text evidence="1">Tetramer of two alpha and two beta subunits.</text>
</comment>
<comment type="subcellular location">
    <subcellularLocation>
        <location evidence="1">Cytoplasm</location>
    </subcellularLocation>
</comment>
<comment type="similarity">
    <text evidence="1">Belongs to the class-II aminoacyl-tRNA synthetase family.</text>
</comment>
<accession>Q3A8N5</accession>
<dbReference type="EC" id="6.1.1.14" evidence="1"/>
<dbReference type="EMBL" id="CP000142">
    <property type="protein sequence ID" value="ABA87858.1"/>
    <property type="molecule type" value="Genomic_DNA"/>
</dbReference>
<dbReference type="RefSeq" id="WP_011340299.1">
    <property type="nucleotide sequence ID" value="NC_007498.2"/>
</dbReference>
<dbReference type="SMR" id="Q3A8N5"/>
<dbReference type="STRING" id="338963.Pcar_0599"/>
<dbReference type="KEGG" id="pca:Pcar_0599"/>
<dbReference type="eggNOG" id="COG0751">
    <property type="taxonomic scope" value="Bacteria"/>
</dbReference>
<dbReference type="HOGENOM" id="CLU_007220_2_2_7"/>
<dbReference type="OrthoDB" id="9775440at2"/>
<dbReference type="Proteomes" id="UP000002534">
    <property type="component" value="Chromosome"/>
</dbReference>
<dbReference type="GO" id="GO:0005829">
    <property type="term" value="C:cytosol"/>
    <property type="evidence" value="ECO:0007669"/>
    <property type="project" value="TreeGrafter"/>
</dbReference>
<dbReference type="GO" id="GO:0005524">
    <property type="term" value="F:ATP binding"/>
    <property type="evidence" value="ECO:0007669"/>
    <property type="project" value="UniProtKB-UniRule"/>
</dbReference>
<dbReference type="GO" id="GO:0004820">
    <property type="term" value="F:glycine-tRNA ligase activity"/>
    <property type="evidence" value="ECO:0007669"/>
    <property type="project" value="UniProtKB-UniRule"/>
</dbReference>
<dbReference type="GO" id="GO:0006426">
    <property type="term" value="P:glycyl-tRNA aminoacylation"/>
    <property type="evidence" value="ECO:0007669"/>
    <property type="project" value="UniProtKB-UniRule"/>
</dbReference>
<dbReference type="HAMAP" id="MF_00255">
    <property type="entry name" value="Gly_tRNA_synth_beta"/>
    <property type="match status" value="1"/>
</dbReference>
<dbReference type="InterPro" id="IPR015944">
    <property type="entry name" value="Gly-tRNA-synth_bsu"/>
</dbReference>
<dbReference type="InterPro" id="IPR006194">
    <property type="entry name" value="Gly-tRNA-synth_heterodimer"/>
</dbReference>
<dbReference type="NCBIfam" id="TIGR00211">
    <property type="entry name" value="glyS"/>
    <property type="match status" value="1"/>
</dbReference>
<dbReference type="PANTHER" id="PTHR30075:SF2">
    <property type="entry name" value="GLYCINE--TRNA LIGASE, CHLOROPLASTIC_MITOCHONDRIAL 2"/>
    <property type="match status" value="1"/>
</dbReference>
<dbReference type="PANTHER" id="PTHR30075">
    <property type="entry name" value="GLYCYL-TRNA SYNTHETASE"/>
    <property type="match status" value="1"/>
</dbReference>
<dbReference type="Pfam" id="PF02092">
    <property type="entry name" value="tRNA_synt_2f"/>
    <property type="match status" value="1"/>
</dbReference>
<dbReference type="PRINTS" id="PR01045">
    <property type="entry name" value="TRNASYNTHGB"/>
</dbReference>
<dbReference type="SUPFAM" id="SSF109604">
    <property type="entry name" value="HD-domain/PDEase-like"/>
    <property type="match status" value="1"/>
</dbReference>
<dbReference type="PROSITE" id="PS50861">
    <property type="entry name" value="AA_TRNA_LIGASE_II_GLYAB"/>
    <property type="match status" value="1"/>
</dbReference>
<organism>
    <name type="scientific">Syntrophotalea carbinolica (strain DSM 2380 / NBRC 103641 / GraBd1)</name>
    <name type="common">Pelobacter carbinolicus</name>
    <dbReference type="NCBI Taxonomy" id="338963"/>
    <lineage>
        <taxon>Bacteria</taxon>
        <taxon>Pseudomonadati</taxon>
        <taxon>Thermodesulfobacteriota</taxon>
        <taxon>Desulfuromonadia</taxon>
        <taxon>Desulfuromonadales</taxon>
        <taxon>Syntrophotaleaceae</taxon>
        <taxon>Syntrophotalea</taxon>
    </lineage>
</organism>
<sequence length="688" mass="75602">MSAELFLEIGTEEIPAGFLPTAMADLERLIRKELETGRIGFETVRTFATPRRLVLAVTGVASGQARQEVTASGPSVSVAFDADGNPTKAALGFARSNGVEVSDLERRETDKGEYLFVSKVVEGRPTGELLPEMLPRIIAAIPFKKSMRWKDLDIRFARPMHWIVALFDGQVVPFSYGNLTSGNLSYGHRFMAPDAFEVSSLEQYLVEAEKHFVIVDPVKRRQIISDQLAEVVGRCGGKLNPDDDLLDEVAFLVEYPAAVMGGFEDSYLQLPPELLITVMREHQRYFTVVDDSGKLLPRFITISNTRAEDLTVVQQGNERVLRARLSDAMFFWNEDRKVKLESRLDALKNVVYQAKLGTSYEKVMRFKTLAVELAQQQVPEVVELTERAASLAKCDLETGMVFEFTELQGVMGREYALLDGEDPRVARAIFEHYLPVQAGGELPGDDVGAFVSIADKIDSICGCFGVGLIPTGTADPFALRRSAIGILNIILDRGYRLSLPALVERSLGLLADKLTRPATEVAADVLEFLRLRFFNMLTAQGLPNDVVDAVLSAAFEDPVDALQRVKGLASFREEGEFEALAVTFKRVVNIVKGGVDTSVDSALFEADCEAGLFDALQNVTGRFEQFVAEGAYLDALRTVGGLRSPVDALFEGVMVMSPDEAVKTNRLALLTAVARLFQGIADFSKIAA</sequence>
<feature type="chain" id="PRO_1000006382" description="Glycine--tRNA ligase beta subunit">
    <location>
        <begin position="1"/>
        <end position="688"/>
    </location>
</feature>
<gene>
    <name evidence="1" type="primary">glyS</name>
    <name type="ordered locus">Pcar_0599</name>
</gene>